<dbReference type="EMBL" id="U00096">
    <property type="protein sequence ID" value="AAC75293.1"/>
    <property type="molecule type" value="Genomic_DNA"/>
</dbReference>
<dbReference type="EMBL" id="AP009048">
    <property type="protein sequence ID" value="BAA16050.2"/>
    <property type="molecule type" value="Genomic_DNA"/>
</dbReference>
<dbReference type="EMBL" id="K02672">
    <property type="status" value="NOT_ANNOTATED_CDS"/>
    <property type="molecule type" value="Genomic_DNA"/>
</dbReference>
<dbReference type="EMBL" id="U30459">
    <property type="protein sequence ID" value="AAA74094.1"/>
    <property type="molecule type" value="Genomic_DNA"/>
</dbReference>
<dbReference type="EMBL" id="Y00544">
    <property type="status" value="NOT_ANNOTATED_CDS"/>
    <property type="molecule type" value="Genomic_DNA"/>
</dbReference>
<dbReference type="PIR" id="G64993">
    <property type="entry name" value="G64993"/>
</dbReference>
<dbReference type="RefSeq" id="NP_416736.1">
    <property type="nucleotide sequence ID" value="NC_000913.3"/>
</dbReference>
<dbReference type="RefSeq" id="WP_001220077.1">
    <property type="nucleotide sequence ID" value="NZ_LN832404.1"/>
</dbReference>
<dbReference type="SMR" id="P45508"/>
<dbReference type="BioGRID" id="4262133">
    <property type="interactions" value="273"/>
</dbReference>
<dbReference type="FunCoup" id="P45508">
    <property type="interactions" value="182"/>
</dbReference>
<dbReference type="IntAct" id="P45508">
    <property type="interactions" value="6"/>
</dbReference>
<dbReference type="STRING" id="511145.b2233"/>
<dbReference type="MEROPS" id="U69.A11"/>
<dbReference type="TCDB" id="1.B.12.1.5">
    <property type="family name" value="the autotransporter-1 (at-1) family"/>
</dbReference>
<dbReference type="PaxDb" id="511145-b2233"/>
<dbReference type="EnsemblBacteria" id="AAC75293">
    <property type="protein sequence ID" value="AAC75293"/>
    <property type="gene ID" value="b2233"/>
</dbReference>
<dbReference type="GeneID" id="946595"/>
<dbReference type="KEGG" id="ecj:JW2227"/>
<dbReference type="KEGG" id="eco:b2233"/>
<dbReference type="KEGG" id="ecoc:C3026_12475"/>
<dbReference type="PATRIC" id="fig|511145.12.peg.2322"/>
<dbReference type="EchoBASE" id="EB2695"/>
<dbReference type="eggNOG" id="COG3468">
    <property type="taxonomic scope" value="Bacteria"/>
</dbReference>
<dbReference type="HOGENOM" id="CLU_003013_0_0_6"/>
<dbReference type="InParanoid" id="P45508"/>
<dbReference type="OMA" id="VFNNNQA"/>
<dbReference type="OrthoDB" id="9780507at2"/>
<dbReference type="PhylomeDB" id="P45508"/>
<dbReference type="BioCyc" id="EcoCyc:EG12850-MONOMER"/>
<dbReference type="PRO" id="PR:P45508"/>
<dbReference type="Proteomes" id="UP000000625">
    <property type="component" value="Chromosome"/>
</dbReference>
<dbReference type="GO" id="GO:0009279">
    <property type="term" value="C:cell outer membrane"/>
    <property type="evidence" value="ECO:0007669"/>
    <property type="project" value="UniProtKB-SubCell"/>
</dbReference>
<dbReference type="GO" id="GO:0009986">
    <property type="term" value="C:cell surface"/>
    <property type="evidence" value="ECO:0007669"/>
    <property type="project" value="UniProtKB-SubCell"/>
</dbReference>
<dbReference type="GO" id="GO:0005576">
    <property type="term" value="C:extracellular region"/>
    <property type="evidence" value="ECO:0007669"/>
    <property type="project" value="UniProtKB-SubCell"/>
</dbReference>
<dbReference type="GO" id="GO:0042597">
    <property type="term" value="C:periplasmic space"/>
    <property type="evidence" value="ECO:0007669"/>
    <property type="project" value="UniProtKB-SubCell"/>
</dbReference>
<dbReference type="GO" id="GO:0008236">
    <property type="term" value="F:serine-type peptidase activity"/>
    <property type="evidence" value="ECO:0007669"/>
    <property type="project" value="UniProtKB-KW"/>
</dbReference>
<dbReference type="GO" id="GO:0043709">
    <property type="term" value="P:cell adhesion involved in single-species biofilm formation"/>
    <property type="evidence" value="ECO:0000315"/>
    <property type="project" value="EcoCyc"/>
</dbReference>
<dbReference type="GO" id="GO:0006508">
    <property type="term" value="P:proteolysis"/>
    <property type="evidence" value="ECO:0007669"/>
    <property type="project" value="UniProtKB-KW"/>
</dbReference>
<dbReference type="GO" id="GO:0009411">
    <property type="term" value="P:response to UV"/>
    <property type="evidence" value="ECO:0000315"/>
    <property type="project" value="EcoCyc"/>
</dbReference>
<dbReference type="CDD" id="cd01344">
    <property type="entry name" value="PL2_Passenger_AT"/>
    <property type="match status" value="1"/>
</dbReference>
<dbReference type="FunFam" id="2.160.20.20:FF:000005">
    <property type="entry name" value="AIDA-I family autotransporter YfaL"/>
    <property type="match status" value="1"/>
</dbReference>
<dbReference type="FunFam" id="2.40.128.130:FF:000003">
    <property type="entry name" value="AIDA-I family autotransporter YfaL"/>
    <property type="match status" value="1"/>
</dbReference>
<dbReference type="Gene3D" id="2.160.20.20">
    <property type="match status" value="1"/>
</dbReference>
<dbReference type="Gene3D" id="2.40.128.130">
    <property type="entry name" value="Autotransporter beta-domain"/>
    <property type="match status" value="1"/>
</dbReference>
<dbReference type="InterPro" id="IPR043990">
    <property type="entry name" value="AC_1"/>
</dbReference>
<dbReference type="InterPro" id="IPR005546">
    <property type="entry name" value="Autotransporte_beta"/>
</dbReference>
<dbReference type="InterPro" id="IPR036709">
    <property type="entry name" value="Autotransporte_beta_dom_sf"/>
</dbReference>
<dbReference type="InterPro" id="IPR012332">
    <property type="entry name" value="Autotransporter_pectin_lyase_C"/>
</dbReference>
<dbReference type="InterPro" id="IPR013425">
    <property type="entry name" value="Autotrns_rpt"/>
</dbReference>
<dbReference type="InterPro" id="IPR050909">
    <property type="entry name" value="Bact_Autotransporter_VF"/>
</dbReference>
<dbReference type="InterPro" id="IPR006315">
    <property type="entry name" value="OM_autotransptr_brl_dom"/>
</dbReference>
<dbReference type="InterPro" id="IPR011050">
    <property type="entry name" value="Pectin_lyase_fold/virulence"/>
</dbReference>
<dbReference type="InterPro" id="IPR003368">
    <property type="entry name" value="POMP_repeat"/>
</dbReference>
<dbReference type="NCBIfam" id="TIGR01414">
    <property type="entry name" value="autotrans_barl"/>
    <property type="match status" value="1"/>
</dbReference>
<dbReference type="NCBIfam" id="TIGR02601">
    <property type="entry name" value="autotrns_rpt"/>
    <property type="match status" value="1"/>
</dbReference>
<dbReference type="NCBIfam" id="TIGR01376">
    <property type="entry name" value="POMP_repeat"/>
    <property type="match status" value="2"/>
</dbReference>
<dbReference type="NCBIfam" id="NF007285">
    <property type="entry name" value="PRK09752.1"/>
    <property type="match status" value="1"/>
</dbReference>
<dbReference type="PANTHER" id="PTHR12338:SF5">
    <property type="entry name" value="ANTIGEN 43-RELATED"/>
    <property type="match status" value="1"/>
</dbReference>
<dbReference type="PANTHER" id="PTHR12338">
    <property type="entry name" value="AUTOTRANSPORTER"/>
    <property type="match status" value="1"/>
</dbReference>
<dbReference type="Pfam" id="PF18883">
    <property type="entry name" value="AC_1"/>
    <property type="match status" value="1"/>
</dbReference>
<dbReference type="Pfam" id="PF03797">
    <property type="entry name" value="Autotransporter"/>
    <property type="match status" value="1"/>
</dbReference>
<dbReference type="Pfam" id="PF02415">
    <property type="entry name" value="Chlam_PMP"/>
    <property type="match status" value="3"/>
</dbReference>
<dbReference type="Pfam" id="PF12951">
    <property type="entry name" value="PATR"/>
    <property type="match status" value="3"/>
</dbReference>
<dbReference type="SMART" id="SM00869">
    <property type="entry name" value="Autotransporter"/>
    <property type="match status" value="1"/>
</dbReference>
<dbReference type="SUPFAM" id="SSF103515">
    <property type="entry name" value="Autotransporter"/>
    <property type="match status" value="1"/>
</dbReference>
<dbReference type="SUPFAM" id="SSF51126">
    <property type="entry name" value="Pectin lyase-like"/>
    <property type="match status" value="2"/>
</dbReference>
<dbReference type="PROSITE" id="PS51208">
    <property type="entry name" value="AUTOTRANSPORTER"/>
    <property type="match status" value="1"/>
</dbReference>
<keyword id="KW-0130">Cell adhesion</keyword>
<keyword id="KW-0998">Cell outer membrane</keyword>
<keyword id="KW-0378">Hydrolase</keyword>
<keyword id="KW-0472">Membrane</keyword>
<keyword id="KW-0574">Periplasm</keyword>
<keyword id="KW-0645">Protease</keyword>
<keyword id="KW-1185">Reference proteome</keyword>
<keyword id="KW-0677">Repeat</keyword>
<keyword id="KW-0964">Secreted</keyword>
<keyword id="KW-0720">Serine protease</keyword>
<keyword id="KW-0732">Signal</keyword>
<name>YFAL_ECOLI</name>
<accession>P45508</accession>
<accession>P39441</accession>
<accession>P45506</accession>
<accession>P45507</accession>
<accession>P76468</accession>
<accession>P77487</accession>
<proteinExistence type="evidence at protein level"/>
<comment type="function">
    <text evidence="4 10 11">Probably an autotransporter (PubMed:16522795, PubMed:22344647). Upon overexpression shows increased adherence to polyvinyl chloride (PVC) plates, increased mature biofilm formation (PubMed:15659678).</text>
</comment>
<comment type="subcellular location">
    <molecule>Probable autotransporter YfaL</molecule>
    <subcellularLocation>
        <location>Periplasm</location>
    </subcellularLocation>
</comment>
<comment type="subcellular location">
    <molecule>Probable secreted autotransporter protein YfaL</molecule>
    <subcellularLocation>
        <location>Secreted</location>
    </subcellularLocation>
    <subcellularLocation>
        <location>Cell surface</location>
    </subcellularLocation>
</comment>
<comment type="subcellular location">
    <molecule>Probable autotransporter YfaL translocator</molecule>
    <subcellularLocation>
        <location evidence="5">Cell outer membrane</location>
    </subcellularLocation>
</comment>
<comment type="domain">
    <text evidence="9">The signal peptide, cleaved at the inner membrane, guides the autotransporter protein to the periplasmic space. Then, insertion of the C-terminal translocator domain in the outer membrane forms a hydrophilic pore for the translocation of the passenger domain to the bacterial cell surface, with subsequent cleavage. Finally, the mature protein remains tightly associated with the bacterium (Probable).</text>
</comment>
<comment type="PTM">
    <text evidence="10">An approximately 170 kDa protein is detected in the outer membrane, while a C-terminal 55 kDa fragment is detected in whole cells. The full-length putative autotransporter may be cleaved to release the mature protein from the outer membrane; Pefabloc SC, a Ser-Thr protease inhibitor prevents the appearance of the 55 kDa C--terminal fragment.</text>
</comment>
<comment type="disruption phenotype">
    <text evidence="4">No change in cell adhesion or biofilm formation (PubMed:15659678).</text>
</comment>
<comment type="biotechnology">
    <text evidence="6">The 'passenger' domain (residues 29-785) can be replaced by other sequences which can be targeted to the cell surface (PubMed:22344647).</text>
</comment>
<comment type="sequence caution" evidence="9">
    <conflict type="frameshift">
        <sequence resource="EMBL" id="K02672"/>
    </conflict>
</comment>
<protein>
    <recommendedName>
        <fullName evidence="7">Probable autotransporter YfaL</fullName>
    </recommendedName>
    <component>
        <recommendedName>
            <fullName evidence="8">Probable secreted autotransporter protein YfaL</fullName>
        </recommendedName>
    </component>
    <component>
        <recommendedName>
            <fullName evidence="8">Probable autotransporter YfaL translocator</fullName>
        </recommendedName>
    </component>
</protein>
<organism>
    <name type="scientific">Escherichia coli (strain K12)</name>
    <dbReference type="NCBI Taxonomy" id="83333"/>
    <lineage>
        <taxon>Bacteria</taxon>
        <taxon>Pseudomonadati</taxon>
        <taxon>Pseudomonadota</taxon>
        <taxon>Gammaproteobacteria</taxon>
        <taxon>Enterobacterales</taxon>
        <taxon>Enterobacteriaceae</taxon>
        <taxon>Escherichia</taxon>
    </lineage>
</organism>
<evidence type="ECO:0000255" key="1"/>
<evidence type="ECO:0000255" key="2">
    <source>
        <dbReference type="PROSITE-ProRule" id="PRU00556"/>
    </source>
</evidence>
<evidence type="ECO:0000256" key="3">
    <source>
        <dbReference type="SAM" id="MobiDB-lite"/>
    </source>
</evidence>
<evidence type="ECO:0000269" key="4">
    <source>
    </source>
</evidence>
<evidence type="ECO:0000269" key="5">
    <source>
    </source>
</evidence>
<evidence type="ECO:0000269" key="6">
    <source>
    </source>
</evidence>
<evidence type="ECO:0000303" key="7">
    <source>
    </source>
</evidence>
<evidence type="ECO:0000303" key="8">
    <source>
    </source>
</evidence>
<evidence type="ECO:0000305" key="9"/>
<evidence type="ECO:0000305" key="10">
    <source>
    </source>
</evidence>
<evidence type="ECO:0000305" key="11">
    <source>
    </source>
</evidence>
<gene>
    <name type="primary">yfaL</name>
    <name type="synonym">yfaF</name>
    <name type="synonym">yfaJ</name>
    <name type="synonym">yfaK</name>
    <name type="ordered locus">b2233</name>
    <name type="ordered locus">JW2227</name>
</gene>
<reference key="1">
    <citation type="journal article" date="1997" name="DNA Res.">
        <title>Construction of a contiguous 874-kb sequence of the Escherichia coli-K12 genome corresponding to 50.0-68.8 min on the linkage map and analysis of its sequence features.</title>
        <authorList>
            <person name="Yamamoto Y."/>
            <person name="Aiba H."/>
            <person name="Baba T."/>
            <person name="Hayashi K."/>
            <person name="Inada T."/>
            <person name="Isono K."/>
            <person name="Itoh T."/>
            <person name="Kimura S."/>
            <person name="Kitagawa M."/>
            <person name="Makino K."/>
            <person name="Miki T."/>
            <person name="Mitsuhashi N."/>
            <person name="Mizobuchi K."/>
            <person name="Mori H."/>
            <person name="Nakade S."/>
            <person name="Nakamura Y."/>
            <person name="Nashimoto H."/>
            <person name="Oshima T."/>
            <person name="Oyama S."/>
            <person name="Saito N."/>
            <person name="Sampei G."/>
            <person name="Satoh Y."/>
            <person name="Sivasundaram S."/>
            <person name="Tagami H."/>
            <person name="Takahashi H."/>
            <person name="Takeda J."/>
            <person name="Takemoto K."/>
            <person name="Uehara K."/>
            <person name="Wada C."/>
            <person name="Yamagata S."/>
            <person name="Horiuchi T."/>
        </authorList>
    </citation>
    <scope>NUCLEOTIDE SEQUENCE [LARGE SCALE GENOMIC DNA]</scope>
    <source>
        <strain>K12 / W3110 / ATCC 27325 / DSM 5911</strain>
    </source>
</reference>
<reference key="2">
    <citation type="journal article" date="1997" name="Science">
        <title>The complete genome sequence of Escherichia coli K-12.</title>
        <authorList>
            <person name="Blattner F.R."/>
            <person name="Plunkett G. III"/>
            <person name="Bloch C.A."/>
            <person name="Perna N.T."/>
            <person name="Burland V."/>
            <person name="Riley M."/>
            <person name="Collado-Vides J."/>
            <person name="Glasner J.D."/>
            <person name="Rode C.K."/>
            <person name="Mayhew G.F."/>
            <person name="Gregor J."/>
            <person name="Davis N.W."/>
            <person name="Kirkpatrick H.A."/>
            <person name="Goeden M.A."/>
            <person name="Rose D.J."/>
            <person name="Mau B."/>
            <person name="Shao Y."/>
        </authorList>
    </citation>
    <scope>NUCLEOTIDE SEQUENCE [LARGE SCALE GENOMIC DNA]</scope>
    <source>
        <strain>K12 / MG1655 / ATCC 47076</strain>
    </source>
</reference>
<reference key="3">
    <citation type="journal article" date="2006" name="Mol. Syst. Biol.">
        <title>Highly accurate genome sequences of Escherichia coli K-12 strains MG1655 and W3110.</title>
        <authorList>
            <person name="Hayashi K."/>
            <person name="Morooka N."/>
            <person name="Yamamoto Y."/>
            <person name="Fujita K."/>
            <person name="Isono K."/>
            <person name="Choi S."/>
            <person name="Ohtsubo E."/>
            <person name="Baba T."/>
            <person name="Wanner B.L."/>
            <person name="Mori H."/>
            <person name="Horiuchi T."/>
        </authorList>
    </citation>
    <scope>NUCLEOTIDE SEQUENCE [LARGE SCALE GENOMIC DNA]</scope>
    <source>
        <strain>K12 / W3110 / ATCC 27325 / DSM 5911</strain>
    </source>
</reference>
<reference key="4">
    <citation type="journal article" date="1984" name="Proc. Natl. Acad. Sci. U.S.A.">
        <title>Primary structure of the Escherichia coli ribonucleoside diphosphate reductase operon.</title>
        <authorList>
            <person name="Carlson J."/>
            <person name="Fuchs J.A."/>
            <person name="Messing J."/>
        </authorList>
    </citation>
    <scope>PRELIMINARY NUCLEOTIDE SEQUENCE [GENOMIC DNA] OF 1-938</scope>
</reference>
<reference key="5">
    <citation type="submission" date="1995-06" db="EMBL/GenBank/DDBJ databases">
        <authorList>
            <person name="Estep P."/>
            <person name="O'Keeffe T."/>
            <person name="Robison K."/>
            <person name="Church G.M."/>
        </authorList>
    </citation>
    <scope>NUCLEOTIDE SEQUENCE [GENOMIC DNA] OF 925-1198</scope>
    <source>
        <strain>K12 / EMG2</strain>
    </source>
</reference>
<reference key="6">
    <citation type="journal article" date="1987" name="Mol. Microbiol.">
        <title>The parD- mutant of Escherichia coli also carries a gyrAam mutation. The complete sequence of gyrA.</title>
        <authorList>
            <person name="Hussain K."/>
            <person name="Elliott E.J."/>
            <person name="Salmond G.P.C."/>
        </authorList>
    </citation>
    <scope>NUCLEOTIDE SEQUENCE [GENOMIC DNA] OF 1180-1250</scope>
    <source>
        <strain>OV6</strain>
    </source>
</reference>
<reference key="7">
    <citation type="journal article" date="1995" name="Nucleic Acids Res.">
        <title>Detection of new genes in a bacterial genome using Markov models for three gene classes.</title>
        <authorList>
            <person name="Borodovsky M."/>
            <person name="McIninch J."/>
            <person name="Koonin E.V."/>
            <person name="Rudd K.E."/>
            <person name="Medigue C."/>
            <person name="Danchin A."/>
        </authorList>
    </citation>
    <scope>IDENTIFICATION</scope>
</reference>
<reference key="8">
    <citation type="journal article" date="2005" name="J. Bacteriol.">
        <title>Combined inactivation and expression strategy to study gene function under physiological conditions: application to identification of new Escherichia coli adhesins.</title>
        <authorList>
            <person name="Roux A."/>
            <person name="Beloin C."/>
            <person name="Ghigo J.M."/>
        </authorList>
    </citation>
    <scope>POSSIBLE FUNCTION IN ADHESION</scope>
    <scope>DISRUPTION PHENOTYPE</scope>
    <source>
        <strain>K12 / MG1655 / ATCC 47076</strain>
    </source>
</reference>
<reference key="9">
    <citation type="journal article" date="2006" name="Protein Sci.">
        <title>New Escherichia coli outer membrane proteins identified through prediction and experimental verification.</title>
        <authorList>
            <person name="Marani P."/>
            <person name="Wagner S."/>
            <person name="Baars L."/>
            <person name="Genevaux P."/>
            <person name="de Gier J.W."/>
            <person name="Nilsson I."/>
            <person name="Casadio R."/>
            <person name="von Heijne G."/>
        </authorList>
    </citation>
    <scope>PUTATIVE FUNCTION</scope>
    <scope>SUBCELLULAR LOCATION</scope>
    <scope>AUTOCLEAVAGE</scope>
    <source>
        <strain>K12 / MG1655 / ATCC 47076</strain>
    </source>
</reference>
<reference key="10">
    <citation type="journal article" date="2012" name="Appl. Environ. Microbiol.">
        <title>Functional cell surface display and controlled secretion of diverse agarolytic enzymes by Escherichia coli with a novel ligation-independent cloning vector based on the autotransporter YfaL.</title>
        <authorList>
            <person name="Ko H.J."/>
            <person name="Park E."/>
            <person name="Song J."/>
            <person name="Yang T.H."/>
            <person name="Lee H.J."/>
            <person name="Kim K.H."/>
            <person name="Choi I.G."/>
        </authorList>
    </citation>
    <scope>PROBABLE FUNCTION</scope>
    <scope>BIOTECHNOLOGY</scope>
    <source>
        <strain>K12 / DH5-alpha</strain>
    </source>
</reference>
<feature type="signal peptide" evidence="1">
    <location>
        <begin position="1"/>
        <end position="28"/>
    </location>
</feature>
<feature type="chain" id="PRO_0000002713" description="Probable autotransporter YfaL">
    <location>
        <begin position="29"/>
        <end position="1250"/>
    </location>
</feature>
<feature type="chain" id="PRO_0000440027" description="Probable secreted autotransporter protein YfaL">
    <location>
        <begin position="29"/>
        <end position="696"/>
    </location>
</feature>
<feature type="chain" id="PRO_0000440028" description="Probable autotransporter YfaL translocator">
    <location>
        <begin position="697"/>
        <end position="1250"/>
    </location>
</feature>
<feature type="repeat" description="1">
    <location>
        <begin position="919"/>
        <end position="920"/>
    </location>
</feature>
<feature type="repeat" description="2; approximate">
    <location>
        <begin position="921"/>
        <end position="922"/>
    </location>
</feature>
<feature type="repeat" description="3">
    <location>
        <begin position="923"/>
        <end position="924"/>
    </location>
</feature>
<feature type="repeat" description="4; approximate">
    <location>
        <begin position="925"/>
        <end position="926"/>
    </location>
</feature>
<feature type="repeat" description="5">
    <location>
        <begin position="927"/>
        <end position="928"/>
    </location>
</feature>
<feature type="repeat" description="6">
    <location>
        <begin position="929"/>
        <end position="930"/>
    </location>
</feature>
<feature type="repeat" description="7">
    <location>
        <begin position="931"/>
        <end position="932"/>
    </location>
</feature>
<feature type="repeat" description="8">
    <location>
        <begin position="933"/>
        <end position="934"/>
    </location>
</feature>
<feature type="repeat" description="9">
    <location>
        <begin position="935"/>
        <end position="936"/>
    </location>
</feature>
<feature type="repeat" description="10">
    <location>
        <begin position="937"/>
        <end position="938"/>
    </location>
</feature>
<feature type="repeat" description="11">
    <location>
        <begin position="939"/>
        <end position="940"/>
    </location>
</feature>
<feature type="repeat" description="12">
    <location>
        <begin position="941"/>
        <end position="942"/>
    </location>
</feature>
<feature type="repeat" description="13">
    <location>
        <begin position="943"/>
        <end position="944"/>
    </location>
</feature>
<feature type="repeat" description="14">
    <location>
        <begin position="945"/>
        <end position="946"/>
    </location>
</feature>
<feature type="repeat" description="15">
    <location>
        <begin position="947"/>
        <end position="948"/>
    </location>
</feature>
<feature type="domain" description="Autotransporter" evidence="2">
    <location>
        <begin position="980"/>
        <end position="1250"/>
    </location>
</feature>
<feature type="region of interest" description="Disordered" evidence="3">
    <location>
        <begin position="914"/>
        <end position="951"/>
    </location>
</feature>
<feature type="region of interest" description="15 X 2 AA approximate tandem repeats of [DTPE]-P">
    <location>
        <begin position="919"/>
        <end position="948"/>
    </location>
</feature>
<feature type="compositionally biased region" description="Acidic residues" evidence="3">
    <location>
        <begin position="928"/>
        <end position="942"/>
    </location>
</feature>
<feature type="sequence conflict" description="In Ref. 4; K02672." evidence="9" ref="4">
    <original>AAV</original>
    <variation>RGRS</variation>
    <location>
        <begin position="28"/>
        <end position="30"/>
    </location>
</feature>
<feature type="sequence conflict" description="In Ref. 4; K02672." evidence="9" ref="4">
    <original>K</original>
    <variation>Q</variation>
    <location>
        <position position="40"/>
    </location>
</feature>
<feature type="sequence conflict" description="In Ref. 4; K02672." evidence="9" ref="4">
    <original>LV</original>
    <variation>PG</variation>
    <location>
        <begin position="65"/>
        <end position="66"/>
    </location>
</feature>
<feature type="sequence conflict" description="In Ref. 4; K02672." evidence="9" ref="4">
    <original>S</original>
    <variation>Q</variation>
    <location>
        <position position="431"/>
    </location>
</feature>
<feature type="sequence conflict" description="In Ref. 4; K02672." evidence="9" ref="4">
    <original>AG</original>
    <variation>SA</variation>
    <location>
        <begin position="433"/>
        <end position="434"/>
    </location>
</feature>
<feature type="sequence conflict" description="In Ref. 4; K02672." evidence="9" ref="4">
    <original>A</original>
    <variation>R</variation>
    <location>
        <position position="478"/>
    </location>
</feature>
<feature type="sequence conflict" description="In Ref. 4; K02672." evidence="9" ref="4">
    <original>E</original>
    <variation>S</variation>
    <location>
        <position position="773"/>
    </location>
</feature>
<feature type="sequence conflict" description="In Ref. 4; K02672." evidence="9" ref="4">
    <original>V</original>
    <variation>M</variation>
    <location>
        <position position="853"/>
    </location>
</feature>
<feature type="sequence conflict" description="In Ref. 4; K02672." evidence="9" ref="4">
    <original>PP</original>
    <variation>AT</variation>
    <location>
        <begin position="923"/>
        <end position="924"/>
    </location>
</feature>
<feature type="sequence conflict" description="In Ref. 5; AAA74094." evidence="9" ref="5">
    <original>PAYQPVLNAKVGGYLNNLRAANQAFMMERRDHAGGDGQTLNLRVIGG</original>
    <variation>LLTSRC</variation>
    <location>
        <begin position="948"/>
        <end position="994"/>
    </location>
</feature>
<sequence>MRIIFLRKEYLSLLPSMIASLFSANGVAAVTDSCQGYDVKASCQASRQSLSGITQDWSIADGQWLVFSDMTNNASGGAVFLQQGAEFSLLPENETGMTLFANNTVTGEYNNGGAIFAKENSTLNLTDVIFSGNVAGGYGGAIYSSGTNDTGAVDLRVTNAMFRNNIANDGKGGAIYTINNDVYLSDVIFDNNQAYTSTSYSDGDGGAIDVTDNNSDSKHPSGYTIVNNTAFTNNTAEGYGGAIYTNSVTAPYLIDISVDDSYSQNGGVLVDENNSAAGYGDGPSSAAGGFMYLGLSEVTFDIADGKTLVIGNTENDGAVDSIAGTGLITKTGSGDLVLNADNNDFTGEMQIENGEVTLGRSNSLMNVGDTHCQDDPQDCYGLTIGSIDQYQNQAELNVGSTQQTFVHALTGFQNGTLNIDAGGNVTVNQGSFAGIIEGAGQLTIAQNGSYVLAGAQSMALTGDIVVDDGAVLSLEGDAADLTALQDDPQSIVLNGGVLDLSDFSTWQSGTSYNDGLEVSGSSGTVIGSQDVVDLAGGDNLHIGGDGKDGVYVVVDASDGQVSLANNNSYLGTTQIASGTLMVSDNSQLGDTHYNRQVIFTDKQQESVMEITSDVDTRSDAAGHGRDIEMRADGEVAVDAGVDTQWGALMADSSGQHQDEGSTLTKTGAGTLELTASGTTQSAVRVEEGTLKGDVADILPYASSLWVGDGATFVTGADQDIQSIDAISSGTIDISDGTVLRLTGQDTSVALNASLFNGDGTLVNATDGVTLTGELNTNLETDSLTYLSNVTVNGNLTNTSGAVSLQNGVAGDTLTVNGDYTGGGTLLLDSELNGDDSVSDQLVMNGNTAGNTTVVVNSITGIGEPTSTGIKVVDFAADPTQFQNNAQFSLAGSGYVNMGAYDYTLVEDNNDWYLRSQEVTPPSPPDPDPTPDPDPTPDPDPTPDPEPTPAYQPVLNAKVGGYLNNLRAANQAFMMERRDHAGGDGQTLNLRVIGGDYHYTAAGQLAQHEDTSTVQLSGDLFSGRWGTDGEWMLGIVGGYSDNQGDSRSNMTGTRADNQNHGYAVGLTSSWFQHGNQKQGAWLDSWLQYAWFSNDVSEQEDGTDHYHSSGIIASLEAGYQWLPGRGVVIEPQAQVIYQGVQQDDFTAANRARVSQSQGDDIQTRLGLHSEWRTAVHVIPTLDLNYYHDPHSTEIEEDGSTISDDAVKQRGEIKVGVTGNISQRVSLRGSVAWQKGSDDFAQTAGFLSMTVKW</sequence>